<comment type="function">
    <text evidence="2">Fatty acyl-coenzyme A (CoA) diphosphatase that hydrolyzes fatty acyl-CoA to yield acyl-4'-phosphopantetheine and adenosine 3',5'-bisphosphate (By similarity). Preferentially hydrolyzes unsaturated long-chain acyl-CoA substrates such as oleoyl-CoA/(9Z)-octadecenoyl-CoA and arachidonoyl-CoA/(5Z,8Z,11Z,14Z)-eicosatetraenoyl-CoA in the endoplasmic reticulum (ER) lumen (By similarity). This catalytic activity is required for maintaining ER structure and for lipid droplets (LDs) biogenesis, which are lipid storage organelles involved in maintaining lipid and energy homeostasis (By similarity). Directly binds to diacylglycerol (DAGs) and triacylglycerol, which is also important for LD biogenesis (By similarity). May support directional budding of nacent LDs from the ER into the cytosol by reducing DAG levels at sites of LD formation (By similarity). Plays a role in the regulation of cell morphology and cytoskeletal organization (By similarity).</text>
</comment>
<comment type="catalytic activity">
    <reaction evidence="2">
        <text>an acyl-CoA + H2O = an acyl-4'-phosphopantetheine + adenosine 3',5'-bisphosphate + 2 H(+)</text>
        <dbReference type="Rhea" id="RHEA:50044"/>
        <dbReference type="ChEBI" id="CHEBI:15377"/>
        <dbReference type="ChEBI" id="CHEBI:15378"/>
        <dbReference type="ChEBI" id="CHEBI:58342"/>
        <dbReference type="ChEBI" id="CHEBI:58343"/>
        <dbReference type="ChEBI" id="CHEBI:132023"/>
    </reaction>
    <physiologicalReaction direction="left-to-right" evidence="2">
        <dbReference type="Rhea" id="RHEA:50045"/>
    </physiologicalReaction>
</comment>
<comment type="catalytic activity">
    <reaction evidence="2">
        <text>(9Z)-octadecenoyl-CoA + H2O = S-(9Z-octadecenoyl)-4'-phosphopantetheine + adenosine 3',5'-bisphosphate + 2 H(+)</text>
        <dbReference type="Rhea" id="RHEA:65564"/>
        <dbReference type="ChEBI" id="CHEBI:15377"/>
        <dbReference type="ChEBI" id="CHEBI:15378"/>
        <dbReference type="ChEBI" id="CHEBI:57387"/>
        <dbReference type="ChEBI" id="CHEBI:58343"/>
        <dbReference type="ChEBI" id="CHEBI:156553"/>
    </reaction>
    <physiologicalReaction direction="left-to-right" evidence="2">
        <dbReference type="Rhea" id="RHEA:65565"/>
    </physiologicalReaction>
</comment>
<comment type="catalytic activity">
    <reaction evidence="2">
        <text>(5Z,8Z,11Z,14Z)-eicosatetraenoyl-CoA + H2O = S-(5Z,8Z,11Z,14Z-eicosatetraenoyl)-4'-phosphopantetheine + adenosine 3',5'-bisphosphate + 2 H(+)</text>
        <dbReference type="Rhea" id="RHEA:65568"/>
        <dbReference type="ChEBI" id="CHEBI:15377"/>
        <dbReference type="ChEBI" id="CHEBI:15378"/>
        <dbReference type="ChEBI" id="CHEBI:57368"/>
        <dbReference type="ChEBI" id="CHEBI:58343"/>
        <dbReference type="ChEBI" id="CHEBI:156554"/>
    </reaction>
    <physiologicalReaction direction="left-to-right" evidence="2">
        <dbReference type="Rhea" id="RHEA:65569"/>
    </physiologicalReaction>
</comment>
<comment type="catalytic activity">
    <reaction evidence="2">
        <text>hexadecanoyl-CoA + H2O = S-hexadecanoyl-4'-phosphopantetheine + adenosine 3',5'-bisphosphate + 2 H(+)</text>
        <dbReference type="Rhea" id="RHEA:50032"/>
        <dbReference type="ChEBI" id="CHEBI:15377"/>
        <dbReference type="ChEBI" id="CHEBI:15378"/>
        <dbReference type="ChEBI" id="CHEBI:57379"/>
        <dbReference type="ChEBI" id="CHEBI:58343"/>
        <dbReference type="ChEBI" id="CHEBI:132018"/>
    </reaction>
    <physiologicalReaction direction="left-to-right" evidence="2">
        <dbReference type="Rhea" id="RHEA:50033"/>
    </physiologicalReaction>
</comment>
<comment type="subcellular location">
    <subcellularLocation>
        <location evidence="2">Endoplasmic reticulum membrane</location>
        <topology evidence="2">Multi-pass membrane protein</topology>
    </subcellularLocation>
</comment>
<comment type="similarity">
    <text evidence="2">Belongs to the FIT family. FIT2 subfamily.</text>
</comment>
<feature type="chain" id="PRO_0000350633" description="Acyl-coenzyme A diphosphatase FITM2">
    <location>
        <begin position="1"/>
        <end position="262"/>
    </location>
</feature>
<feature type="topological domain" description="Cytoplasmic" evidence="3">
    <location>
        <begin position="1"/>
        <end position="23"/>
    </location>
</feature>
<feature type="transmembrane region" description="Helical" evidence="1">
    <location>
        <begin position="24"/>
        <end position="44"/>
    </location>
</feature>
<feature type="topological domain" description="Lumenal" evidence="3">
    <location>
        <begin position="45"/>
        <end position="57"/>
    </location>
</feature>
<feature type="transmembrane region" description="Helical" evidence="1">
    <location>
        <begin position="58"/>
        <end position="78"/>
    </location>
</feature>
<feature type="topological domain" description="Cytoplasmic" evidence="3">
    <location>
        <begin position="79"/>
        <end position="93"/>
    </location>
</feature>
<feature type="transmembrane region" description="Helical" evidence="1">
    <location>
        <begin position="94"/>
        <end position="114"/>
    </location>
</feature>
<feature type="topological domain" description="Lumenal" evidence="3">
    <location>
        <begin position="115"/>
        <end position="145"/>
    </location>
</feature>
<feature type="transmembrane region" description="Helical" evidence="1">
    <location>
        <begin position="146"/>
        <end position="166"/>
    </location>
</feature>
<feature type="topological domain" description="Cytoplasmic" evidence="3">
    <location>
        <begin position="167"/>
        <end position="185"/>
    </location>
</feature>
<feature type="transmembrane region" description="Helical" evidence="1">
    <location>
        <begin position="186"/>
        <end position="206"/>
    </location>
</feature>
<feature type="topological domain" description="Lumenal" evidence="3">
    <location>
        <begin position="207"/>
        <end position="218"/>
    </location>
</feature>
<feature type="transmembrane region" description="Helical" evidence="1">
    <location>
        <begin position="219"/>
        <end position="239"/>
    </location>
</feature>
<feature type="topological domain" description="Cytoplasmic" evidence="3">
    <location>
        <begin position="240"/>
        <end position="262"/>
    </location>
</feature>
<feature type="active site" evidence="2">
    <location>
        <position position="155"/>
    </location>
</feature>
<feature type="active site" evidence="2">
    <location>
        <position position="214"/>
    </location>
</feature>
<reference key="1">
    <citation type="submission" date="2008-03" db="EMBL/GenBank/DDBJ databases">
        <authorList>
            <person name="Wang J."/>
            <person name="Yang G.-Y."/>
            <person name="Li H.-J."/>
            <person name="Wang Y.-L."/>
            <person name="Zhao W.-D."/>
            <person name="Wang W.-J."/>
        </authorList>
    </citation>
    <scope>NUCLEOTIDE SEQUENCE [MRNA]</scope>
</reference>
<organism>
    <name type="scientific">Sus scrofa</name>
    <name type="common">Pig</name>
    <dbReference type="NCBI Taxonomy" id="9823"/>
    <lineage>
        <taxon>Eukaryota</taxon>
        <taxon>Metazoa</taxon>
        <taxon>Chordata</taxon>
        <taxon>Craniata</taxon>
        <taxon>Vertebrata</taxon>
        <taxon>Euteleostomi</taxon>
        <taxon>Mammalia</taxon>
        <taxon>Eutheria</taxon>
        <taxon>Laurasiatheria</taxon>
        <taxon>Artiodactyla</taxon>
        <taxon>Suina</taxon>
        <taxon>Suidae</taxon>
        <taxon>Sus</taxon>
    </lineage>
</organism>
<keyword id="KW-0256">Endoplasmic reticulum</keyword>
<keyword id="KW-0378">Hydrolase</keyword>
<keyword id="KW-0443">Lipid metabolism</keyword>
<keyword id="KW-0472">Membrane</keyword>
<keyword id="KW-1185">Reference proteome</keyword>
<keyword id="KW-0812">Transmembrane</keyword>
<keyword id="KW-1133">Transmembrane helix</keyword>
<accession>B2LYG4</accession>
<proteinExistence type="evidence at transcript level"/>
<sequence length="262" mass="29633">MEHLERCAWVLRGTLVRAAVRRYLPWALAASMLAGSLLKELSPLPESYLSNKRNVLNVYFVKVAWAWTFCLLLPFIALTNYHLTGKAGLVLRRLSTLLVGTAIWYVCTAIFSNVEHYTGSCYQSPALEGVRNEPLSKQQCHGQGGFWHGFDISGHSFLLTFCALMIVEEMAVLHEVKTDRSHCLHVAITALVVALGFLTFIWVWMFLCTAVYFHNLSQKVFGTLFGLLGWYGTYGFWYLKSFSPGLPPQSCSSNLKQDSYKR</sequence>
<name>FITM2_PIG</name>
<protein>
    <recommendedName>
        <fullName evidence="2">Acyl-coenzyme A diphosphatase FITM2</fullName>
        <ecNumber evidence="2">3.6.1.-</ecNumber>
    </recommendedName>
    <alternativeName>
        <fullName evidence="2">Fat storage-inducing transmembrane protein 2</fullName>
    </alternativeName>
    <alternativeName>
        <fullName evidence="2">Fat-inducing protein 2</fullName>
    </alternativeName>
</protein>
<dbReference type="EC" id="3.6.1.-" evidence="2"/>
<dbReference type="EMBL" id="EU596460">
    <property type="protein sequence ID" value="ACC59091.1"/>
    <property type="molecule type" value="mRNA"/>
</dbReference>
<dbReference type="RefSeq" id="NP_001121932.1">
    <property type="nucleotide sequence ID" value="NM_001128460.1"/>
</dbReference>
<dbReference type="SMR" id="B2LYG4"/>
<dbReference type="FunCoup" id="B2LYG4">
    <property type="interactions" value="460"/>
</dbReference>
<dbReference type="STRING" id="9823.ENSSSCP00000051991"/>
<dbReference type="PaxDb" id="9823-ENSSSCP00000007854"/>
<dbReference type="Ensembl" id="ENSSSCT00015104822.1">
    <property type="protein sequence ID" value="ENSSSCP00015043865.1"/>
    <property type="gene ID" value="ENSSSCG00015077492.1"/>
</dbReference>
<dbReference type="Ensembl" id="ENSSSCT00025082983.1">
    <property type="protein sequence ID" value="ENSSSCP00025036066.1"/>
    <property type="gene ID" value="ENSSSCG00025060557.1"/>
</dbReference>
<dbReference type="Ensembl" id="ENSSSCT00030040070.1">
    <property type="protein sequence ID" value="ENSSSCP00030018405.1"/>
    <property type="gene ID" value="ENSSSCG00030028631.1"/>
</dbReference>
<dbReference type="Ensembl" id="ENSSSCT00035105881.1">
    <property type="protein sequence ID" value="ENSSSCP00035045538.1"/>
    <property type="gene ID" value="ENSSSCG00035077582.1"/>
</dbReference>
<dbReference type="Ensembl" id="ENSSSCT00045067506.1">
    <property type="protein sequence ID" value="ENSSSCP00045047944.1"/>
    <property type="gene ID" value="ENSSSCG00045038859.1"/>
</dbReference>
<dbReference type="Ensembl" id="ENSSSCT00050002210.1">
    <property type="protein sequence ID" value="ENSSSCP00050000666.1"/>
    <property type="gene ID" value="ENSSSCG00050001772.1"/>
</dbReference>
<dbReference type="Ensembl" id="ENSSSCT00055016045.1">
    <property type="protein sequence ID" value="ENSSSCP00055012618.1"/>
    <property type="gene ID" value="ENSSSCG00055008224.1"/>
</dbReference>
<dbReference type="Ensembl" id="ENSSSCT00060010789.1">
    <property type="protein sequence ID" value="ENSSSCP00060003967.1"/>
    <property type="gene ID" value="ENSSSCG00060008430.1"/>
</dbReference>
<dbReference type="Ensembl" id="ENSSSCT00065098993.1">
    <property type="protein sequence ID" value="ENSSSCP00065043426.1"/>
    <property type="gene ID" value="ENSSSCG00065072019.1"/>
</dbReference>
<dbReference type="Ensembl" id="ENSSSCT00085052736">
    <property type="protein sequence ID" value="ENSSSCP00085036866"/>
    <property type="gene ID" value="ENSSSCG00085027559"/>
</dbReference>
<dbReference type="Ensembl" id="ENSSSCT00090006009">
    <property type="protein sequence ID" value="ENSSSCP00090003869"/>
    <property type="gene ID" value="ENSSSCG00090003390"/>
</dbReference>
<dbReference type="Ensembl" id="ENSSSCT00105028703">
    <property type="protein sequence ID" value="ENSSSCP00105020126"/>
    <property type="gene ID" value="ENSSSCG00105014848"/>
</dbReference>
<dbReference type="Ensembl" id="ENSSSCT00110054940">
    <property type="protein sequence ID" value="ENSSSCP00110038146"/>
    <property type="gene ID" value="ENSSSCG00110028685"/>
</dbReference>
<dbReference type="Ensembl" id="ENSSSCT00115033907">
    <property type="protein sequence ID" value="ENSSSCP00115032184"/>
    <property type="gene ID" value="ENSSSCG00115019173"/>
</dbReference>
<dbReference type="Ensembl" id="ENSSSCT00130001096">
    <property type="protein sequence ID" value="ENSSSCP00130000807"/>
    <property type="gene ID" value="ENSSSCG00130000594"/>
</dbReference>
<dbReference type="GeneID" id="100158013"/>
<dbReference type="KEGG" id="ssc:100158013"/>
<dbReference type="CTD" id="128486"/>
<dbReference type="eggNOG" id="KOG3750">
    <property type="taxonomic scope" value="Eukaryota"/>
</dbReference>
<dbReference type="HOGENOM" id="CLU_049499_1_1_1"/>
<dbReference type="InParanoid" id="B2LYG4"/>
<dbReference type="OrthoDB" id="5579088at2759"/>
<dbReference type="Reactome" id="R-SSC-8964572">
    <property type="pathway name" value="Lipid particle organization"/>
</dbReference>
<dbReference type="Proteomes" id="UP000008227">
    <property type="component" value="Unplaced"/>
</dbReference>
<dbReference type="Proteomes" id="UP000314985">
    <property type="component" value="Unplaced"/>
</dbReference>
<dbReference type="Proteomes" id="UP000694570">
    <property type="component" value="Unplaced"/>
</dbReference>
<dbReference type="Proteomes" id="UP000694571">
    <property type="component" value="Unplaced"/>
</dbReference>
<dbReference type="Proteomes" id="UP000694720">
    <property type="component" value="Unplaced"/>
</dbReference>
<dbReference type="Proteomes" id="UP000694722">
    <property type="component" value="Unplaced"/>
</dbReference>
<dbReference type="Proteomes" id="UP000694723">
    <property type="component" value="Unplaced"/>
</dbReference>
<dbReference type="Proteomes" id="UP000694724">
    <property type="component" value="Unplaced"/>
</dbReference>
<dbReference type="Proteomes" id="UP000694725">
    <property type="component" value="Unplaced"/>
</dbReference>
<dbReference type="Proteomes" id="UP000694726">
    <property type="component" value="Unplaced"/>
</dbReference>
<dbReference type="Proteomes" id="UP000694727">
    <property type="component" value="Unplaced"/>
</dbReference>
<dbReference type="Proteomes" id="UP000694728">
    <property type="component" value="Unplaced"/>
</dbReference>
<dbReference type="GO" id="GO:0005789">
    <property type="term" value="C:endoplasmic reticulum membrane"/>
    <property type="evidence" value="ECO:0000250"/>
    <property type="project" value="UniProtKB"/>
</dbReference>
<dbReference type="GO" id="GO:0010945">
    <property type="term" value="F:coenzyme A diphosphatase activity"/>
    <property type="evidence" value="ECO:0000250"/>
    <property type="project" value="UniProtKB"/>
</dbReference>
<dbReference type="GO" id="GO:0019992">
    <property type="term" value="F:diacylglycerol binding"/>
    <property type="evidence" value="ECO:0000250"/>
    <property type="project" value="UniProtKB"/>
</dbReference>
<dbReference type="GO" id="GO:0017129">
    <property type="term" value="F:triglyceride binding"/>
    <property type="evidence" value="ECO:0000250"/>
    <property type="project" value="UniProtKB"/>
</dbReference>
<dbReference type="GO" id="GO:0007010">
    <property type="term" value="P:cytoskeleton organization"/>
    <property type="evidence" value="ECO:0000250"/>
    <property type="project" value="UniProtKB"/>
</dbReference>
<dbReference type="GO" id="GO:0045444">
    <property type="term" value="P:fat cell differentiation"/>
    <property type="evidence" value="ECO:0000250"/>
    <property type="project" value="UniProtKB"/>
</dbReference>
<dbReference type="GO" id="GO:0036115">
    <property type="term" value="P:fatty-acyl-CoA catabolic process"/>
    <property type="evidence" value="ECO:0000250"/>
    <property type="project" value="UniProtKB"/>
</dbReference>
<dbReference type="GO" id="GO:0035356">
    <property type="term" value="P:intracellular triglyceride homeostasis"/>
    <property type="evidence" value="ECO:0000250"/>
    <property type="project" value="UniProtKB"/>
</dbReference>
<dbReference type="GO" id="GO:0140042">
    <property type="term" value="P:lipid droplet formation"/>
    <property type="evidence" value="ECO:0000250"/>
    <property type="project" value="UniProtKB"/>
</dbReference>
<dbReference type="GO" id="GO:0034389">
    <property type="term" value="P:lipid droplet organization"/>
    <property type="evidence" value="ECO:0000250"/>
    <property type="project" value="UniProtKB"/>
</dbReference>
<dbReference type="GO" id="GO:0055088">
    <property type="term" value="P:lipid homeostasis"/>
    <property type="evidence" value="ECO:0000250"/>
    <property type="project" value="UniProtKB"/>
</dbReference>
<dbReference type="GO" id="GO:0019915">
    <property type="term" value="P:lipid storage"/>
    <property type="evidence" value="ECO:0000318"/>
    <property type="project" value="GO_Central"/>
</dbReference>
<dbReference type="GO" id="GO:0008654">
    <property type="term" value="P:phospholipid biosynthetic process"/>
    <property type="evidence" value="ECO:0000318"/>
    <property type="project" value="GO_Central"/>
</dbReference>
<dbReference type="GO" id="GO:0022604">
    <property type="term" value="P:regulation of cell morphogenesis"/>
    <property type="evidence" value="ECO:0000250"/>
    <property type="project" value="UniProtKB"/>
</dbReference>
<dbReference type="GO" id="GO:0006641">
    <property type="term" value="P:triglyceride metabolic process"/>
    <property type="evidence" value="ECO:0000250"/>
    <property type="project" value="UniProtKB"/>
</dbReference>
<dbReference type="HAMAP" id="MF_03230">
    <property type="entry name" value="FITM2"/>
    <property type="match status" value="1"/>
</dbReference>
<dbReference type="InterPro" id="IPR019388">
    <property type="entry name" value="FIT"/>
</dbReference>
<dbReference type="InterPro" id="IPR046401">
    <property type="entry name" value="FITM1/2"/>
</dbReference>
<dbReference type="PANTHER" id="PTHR23129">
    <property type="entry name" value="ACYL-COENZYME A DIPHOSPHATASE FITM2"/>
    <property type="match status" value="1"/>
</dbReference>
<dbReference type="PANTHER" id="PTHR23129:SF1">
    <property type="entry name" value="ACYL-COENZYME A DIPHOSPHATASE FITM2"/>
    <property type="match status" value="1"/>
</dbReference>
<dbReference type="Pfam" id="PF10261">
    <property type="entry name" value="FIT"/>
    <property type="match status" value="2"/>
</dbReference>
<evidence type="ECO:0000255" key="1"/>
<evidence type="ECO:0000255" key="2">
    <source>
        <dbReference type="HAMAP-Rule" id="MF_03230"/>
    </source>
</evidence>
<evidence type="ECO:0000305" key="3"/>
<gene>
    <name evidence="2" type="primary">FITM2</name>
    <name evidence="2" type="synonym">FIT2</name>
</gene>